<proteinExistence type="inferred from homology"/>
<keyword id="KW-0131">Cell cycle</keyword>
<keyword id="KW-0132">Cell division</keyword>
<keyword id="KW-0133">Cell shape</keyword>
<keyword id="KW-0961">Cell wall biogenesis/degradation</keyword>
<keyword id="KW-0963">Cytoplasm</keyword>
<keyword id="KW-0326">Glycosidase</keyword>
<keyword id="KW-0378">Hydrolase</keyword>
<keyword id="KW-0573">Peptidoglycan synthesis</keyword>
<comment type="function">
    <text evidence="1">Plays a role in peptidoglycan recycling by cleaving the terminal beta-1,4-linked N-acetylglucosamine (GlcNAc) from peptide-linked peptidoglycan fragments, giving rise to free GlcNAc, anhydro-N-acetylmuramic acid and anhydro-N-acetylmuramic acid-linked peptides.</text>
</comment>
<comment type="catalytic activity">
    <reaction evidence="1">
        <text>Hydrolysis of terminal non-reducing N-acetyl-D-hexosamine residues in N-acetyl-beta-D-hexosaminides.</text>
        <dbReference type="EC" id="3.2.1.52"/>
    </reaction>
</comment>
<comment type="pathway">
    <text evidence="1">Cell wall biogenesis; peptidoglycan recycling.</text>
</comment>
<comment type="subcellular location">
    <subcellularLocation>
        <location evidence="1">Cytoplasm</location>
    </subcellularLocation>
</comment>
<comment type="similarity">
    <text evidence="1">Belongs to the glycosyl hydrolase 3 family. NagZ subfamily.</text>
</comment>
<accession>B7NKH2</accession>
<evidence type="ECO:0000255" key="1">
    <source>
        <dbReference type="HAMAP-Rule" id="MF_00364"/>
    </source>
</evidence>
<feature type="chain" id="PRO_1000121055" description="Beta-hexosaminidase">
    <location>
        <begin position="1"/>
        <end position="341"/>
    </location>
</feature>
<feature type="active site" description="Proton donor/acceptor" evidence="1">
    <location>
        <position position="176"/>
    </location>
</feature>
<feature type="active site" description="Nucleophile" evidence="1">
    <location>
        <position position="248"/>
    </location>
</feature>
<feature type="binding site" evidence="1">
    <location>
        <position position="62"/>
    </location>
    <ligand>
        <name>substrate</name>
    </ligand>
</feature>
<feature type="binding site" evidence="1">
    <location>
        <position position="70"/>
    </location>
    <ligand>
        <name>substrate</name>
    </ligand>
</feature>
<feature type="binding site" evidence="1">
    <location>
        <position position="133"/>
    </location>
    <ligand>
        <name>substrate</name>
    </ligand>
</feature>
<feature type="binding site" evidence="1">
    <location>
        <begin position="163"/>
        <end position="164"/>
    </location>
    <ligand>
        <name>substrate</name>
    </ligand>
</feature>
<feature type="site" description="Important for catalytic activity" evidence="1">
    <location>
        <position position="174"/>
    </location>
</feature>
<organism>
    <name type="scientific">Escherichia coli O7:K1 (strain IAI39 / ExPEC)</name>
    <dbReference type="NCBI Taxonomy" id="585057"/>
    <lineage>
        <taxon>Bacteria</taxon>
        <taxon>Pseudomonadati</taxon>
        <taxon>Pseudomonadota</taxon>
        <taxon>Gammaproteobacteria</taxon>
        <taxon>Enterobacterales</taxon>
        <taxon>Enterobacteriaceae</taxon>
        <taxon>Escherichia</taxon>
    </lineage>
</organism>
<reference key="1">
    <citation type="journal article" date="2009" name="PLoS Genet.">
        <title>Organised genome dynamics in the Escherichia coli species results in highly diverse adaptive paths.</title>
        <authorList>
            <person name="Touchon M."/>
            <person name="Hoede C."/>
            <person name="Tenaillon O."/>
            <person name="Barbe V."/>
            <person name="Baeriswyl S."/>
            <person name="Bidet P."/>
            <person name="Bingen E."/>
            <person name="Bonacorsi S."/>
            <person name="Bouchier C."/>
            <person name="Bouvet O."/>
            <person name="Calteau A."/>
            <person name="Chiapello H."/>
            <person name="Clermont O."/>
            <person name="Cruveiller S."/>
            <person name="Danchin A."/>
            <person name="Diard M."/>
            <person name="Dossat C."/>
            <person name="Karoui M.E."/>
            <person name="Frapy E."/>
            <person name="Garry L."/>
            <person name="Ghigo J.M."/>
            <person name="Gilles A.M."/>
            <person name="Johnson J."/>
            <person name="Le Bouguenec C."/>
            <person name="Lescat M."/>
            <person name="Mangenot S."/>
            <person name="Martinez-Jehanne V."/>
            <person name="Matic I."/>
            <person name="Nassif X."/>
            <person name="Oztas S."/>
            <person name="Petit M.A."/>
            <person name="Pichon C."/>
            <person name="Rouy Z."/>
            <person name="Ruf C.S."/>
            <person name="Schneider D."/>
            <person name="Tourret J."/>
            <person name="Vacherie B."/>
            <person name="Vallenet D."/>
            <person name="Medigue C."/>
            <person name="Rocha E.P.C."/>
            <person name="Denamur E."/>
        </authorList>
    </citation>
    <scope>NUCLEOTIDE SEQUENCE [LARGE SCALE GENOMIC DNA]</scope>
    <source>
        <strain>IAI39 / ExPEC</strain>
    </source>
</reference>
<sequence>MGPVMLDVEGYELDAEEREILAHPLVGGLILFTRNYHDPAQLRELVRQIRAASRNHLVVAVDQEGGRVQRFREGFTRLPAAQSFAALLGMEEGGKLAQEAGWLMASEMIAMDIDISFAPVLDVGHISAAIGERSYHADPEKALAIASRFIDGMHEAGMKTTGKHFPGHGAVTADSHKETPCDPRPQAEIRAKDMSVFSSLIRENKLDAIMPAHVIYSDVDPRPASGSPYWLKTVLRQELGFDGVIFSDDLSMEGAAIMGSYAERGQASLDAGCDMILVCNNRKGAVSVLDNLSPIKAERVTRLYHKGSFSRQELMDSARWKAISARLNQLHERWQEEKAGH</sequence>
<name>NAGZ_ECO7I</name>
<gene>
    <name evidence="1" type="primary">nagZ</name>
    <name type="ordered locus">ECIAI39_2053</name>
</gene>
<protein>
    <recommendedName>
        <fullName evidence="1">Beta-hexosaminidase</fullName>
        <ecNumber evidence="1">3.2.1.52</ecNumber>
    </recommendedName>
    <alternativeName>
        <fullName evidence="1">Beta-N-acetylhexosaminidase</fullName>
    </alternativeName>
    <alternativeName>
        <fullName evidence="1">N-acetyl-beta-glucosaminidase</fullName>
    </alternativeName>
</protein>
<dbReference type="EC" id="3.2.1.52" evidence="1"/>
<dbReference type="EMBL" id="CU928164">
    <property type="protein sequence ID" value="CAR18180.1"/>
    <property type="molecule type" value="Genomic_DNA"/>
</dbReference>
<dbReference type="RefSeq" id="WP_000529284.1">
    <property type="nucleotide sequence ID" value="NC_011750.1"/>
</dbReference>
<dbReference type="RefSeq" id="YP_002408020.1">
    <property type="nucleotide sequence ID" value="NC_011750.1"/>
</dbReference>
<dbReference type="SMR" id="B7NKH2"/>
<dbReference type="STRING" id="585057.ECIAI39_2053"/>
<dbReference type="CAZy" id="GH3">
    <property type="family name" value="Glycoside Hydrolase Family 3"/>
</dbReference>
<dbReference type="KEGG" id="ect:ECIAI39_2053"/>
<dbReference type="PATRIC" id="fig|585057.6.peg.2133"/>
<dbReference type="HOGENOM" id="CLU_008392_0_0_6"/>
<dbReference type="UniPathway" id="UPA00544"/>
<dbReference type="Proteomes" id="UP000000749">
    <property type="component" value="Chromosome"/>
</dbReference>
<dbReference type="GO" id="GO:0005737">
    <property type="term" value="C:cytoplasm"/>
    <property type="evidence" value="ECO:0007669"/>
    <property type="project" value="UniProtKB-SubCell"/>
</dbReference>
<dbReference type="GO" id="GO:0004563">
    <property type="term" value="F:beta-N-acetylhexosaminidase activity"/>
    <property type="evidence" value="ECO:0007669"/>
    <property type="project" value="UniProtKB-UniRule"/>
</dbReference>
<dbReference type="GO" id="GO:0005975">
    <property type="term" value="P:carbohydrate metabolic process"/>
    <property type="evidence" value="ECO:0007669"/>
    <property type="project" value="InterPro"/>
</dbReference>
<dbReference type="GO" id="GO:0051301">
    <property type="term" value="P:cell division"/>
    <property type="evidence" value="ECO:0007669"/>
    <property type="project" value="UniProtKB-KW"/>
</dbReference>
<dbReference type="GO" id="GO:0071555">
    <property type="term" value="P:cell wall organization"/>
    <property type="evidence" value="ECO:0007669"/>
    <property type="project" value="UniProtKB-KW"/>
</dbReference>
<dbReference type="GO" id="GO:0009252">
    <property type="term" value="P:peptidoglycan biosynthetic process"/>
    <property type="evidence" value="ECO:0007669"/>
    <property type="project" value="UniProtKB-KW"/>
</dbReference>
<dbReference type="GO" id="GO:0009254">
    <property type="term" value="P:peptidoglycan turnover"/>
    <property type="evidence" value="ECO:0007669"/>
    <property type="project" value="UniProtKB-UniRule"/>
</dbReference>
<dbReference type="GO" id="GO:0008360">
    <property type="term" value="P:regulation of cell shape"/>
    <property type="evidence" value="ECO:0007669"/>
    <property type="project" value="UniProtKB-KW"/>
</dbReference>
<dbReference type="FunFam" id="3.20.20.300:FF:000001">
    <property type="entry name" value="Beta-hexosaminidase"/>
    <property type="match status" value="1"/>
</dbReference>
<dbReference type="Gene3D" id="3.20.20.300">
    <property type="entry name" value="Glycoside hydrolase, family 3, N-terminal domain"/>
    <property type="match status" value="1"/>
</dbReference>
<dbReference type="HAMAP" id="MF_00364">
    <property type="entry name" value="NagZ"/>
    <property type="match status" value="1"/>
</dbReference>
<dbReference type="InterPro" id="IPR022956">
    <property type="entry name" value="Beta_hexosaminidase_bac"/>
</dbReference>
<dbReference type="InterPro" id="IPR019800">
    <property type="entry name" value="Glyco_hydro_3_AS"/>
</dbReference>
<dbReference type="InterPro" id="IPR001764">
    <property type="entry name" value="Glyco_hydro_3_N"/>
</dbReference>
<dbReference type="InterPro" id="IPR036962">
    <property type="entry name" value="Glyco_hydro_3_N_sf"/>
</dbReference>
<dbReference type="InterPro" id="IPR017853">
    <property type="entry name" value="Glycoside_hydrolase_SF"/>
</dbReference>
<dbReference type="InterPro" id="IPR050226">
    <property type="entry name" value="NagZ_Beta-hexosaminidase"/>
</dbReference>
<dbReference type="NCBIfam" id="NF003740">
    <property type="entry name" value="PRK05337.1"/>
    <property type="match status" value="1"/>
</dbReference>
<dbReference type="PANTHER" id="PTHR30480:SF13">
    <property type="entry name" value="BETA-HEXOSAMINIDASE"/>
    <property type="match status" value="1"/>
</dbReference>
<dbReference type="PANTHER" id="PTHR30480">
    <property type="entry name" value="BETA-HEXOSAMINIDASE-RELATED"/>
    <property type="match status" value="1"/>
</dbReference>
<dbReference type="Pfam" id="PF00933">
    <property type="entry name" value="Glyco_hydro_3"/>
    <property type="match status" value="1"/>
</dbReference>
<dbReference type="SUPFAM" id="SSF51445">
    <property type="entry name" value="(Trans)glycosidases"/>
    <property type="match status" value="1"/>
</dbReference>
<dbReference type="PROSITE" id="PS00775">
    <property type="entry name" value="GLYCOSYL_HYDROL_F3"/>
    <property type="match status" value="1"/>
</dbReference>